<gene>
    <name evidence="1" type="primary">psbM</name>
    <name type="ordered locus">cce_0893</name>
</gene>
<feature type="chain" id="PRO_1000192881" description="Photosystem II reaction center protein M">
    <location>
        <begin position="1"/>
        <end position="35"/>
    </location>
</feature>
<feature type="transmembrane region" description="Helical" evidence="1">
    <location>
        <begin position="7"/>
        <end position="27"/>
    </location>
</feature>
<dbReference type="EMBL" id="CP000806">
    <property type="protein sequence ID" value="ACB50244.1"/>
    <property type="molecule type" value="Genomic_DNA"/>
</dbReference>
<dbReference type="RefSeq" id="WP_009546127.1">
    <property type="nucleotide sequence ID" value="NC_010546.1"/>
</dbReference>
<dbReference type="SMR" id="B1WS50"/>
<dbReference type="STRING" id="43989.cce_0893"/>
<dbReference type="KEGG" id="cyt:cce_0893"/>
<dbReference type="eggNOG" id="ENOG50339PB">
    <property type="taxonomic scope" value="Bacteria"/>
</dbReference>
<dbReference type="HOGENOM" id="CLU_215415_0_0_3"/>
<dbReference type="OrthoDB" id="532820at2"/>
<dbReference type="Proteomes" id="UP000001203">
    <property type="component" value="Chromosome circular"/>
</dbReference>
<dbReference type="GO" id="GO:0009523">
    <property type="term" value="C:photosystem II"/>
    <property type="evidence" value="ECO:0007669"/>
    <property type="project" value="UniProtKB-KW"/>
</dbReference>
<dbReference type="GO" id="GO:0031676">
    <property type="term" value="C:plasma membrane-derived thylakoid membrane"/>
    <property type="evidence" value="ECO:0007669"/>
    <property type="project" value="UniProtKB-SubCell"/>
</dbReference>
<dbReference type="GO" id="GO:0019684">
    <property type="term" value="P:photosynthesis, light reaction"/>
    <property type="evidence" value="ECO:0007669"/>
    <property type="project" value="InterPro"/>
</dbReference>
<dbReference type="HAMAP" id="MF_00438">
    <property type="entry name" value="PSII_PsbM"/>
    <property type="match status" value="1"/>
</dbReference>
<dbReference type="InterPro" id="IPR007826">
    <property type="entry name" value="PSII_PsbM"/>
</dbReference>
<dbReference type="InterPro" id="IPR037269">
    <property type="entry name" value="PSII_PsbM_sf"/>
</dbReference>
<dbReference type="NCBIfam" id="TIGR03038">
    <property type="entry name" value="PS_II_psbM"/>
    <property type="match status" value="1"/>
</dbReference>
<dbReference type="PANTHER" id="PTHR35774">
    <property type="entry name" value="PHOTOSYSTEM II REACTION CENTER PROTEIN M"/>
    <property type="match status" value="1"/>
</dbReference>
<dbReference type="PANTHER" id="PTHR35774:SF1">
    <property type="entry name" value="PHOTOSYSTEM II REACTION CENTER PROTEIN M"/>
    <property type="match status" value="1"/>
</dbReference>
<dbReference type="Pfam" id="PF05151">
    <property type="entry name" value="PsbM"/>
    <property type="match status" value="1"/>
</dbReference>
<dbReference type="SUPFAM" id="SSF161033">
    <property type="entry name" value="Photosystem II reaction center protein M, PsbM"/>
    <property type="match status" value="1"/>
</dbReference>
<comment type="function">
    <text evidence="1">One of the components of the core complex of photosystem II (PSII). PSII is a light-driven water:plastoquinone oxidoreductase that uses light energy to abstract electrons from H(2)O, generating O(2) and a proton gradient subsequently used for ATP formation. It consists of a core antenna complex that captures photons, and an electron transfer chain that converts photonic excitation into a charge separation. This subunit is found at the monomer-monomer interface.</text>
</comment>
<comment type="subunit">
    <text evidence="1">PSII is composed of 1 copy each of membrane proteins PsbA, PsbB, PsbC, PsbD, PsbE, PsbF, PsbH, PsbI, PsbJ, PsbK, PsbL, PsbM, PsbT, PsbX, PsbY, PsbZ, Psb30/Ycf12, peripheral proteins PsbO, CyanoQ (PsbQ), PsbU, PsbV and a large number of cofactors. It forms dimeric complexes.</text>
</comment>
<comment type="subcellular location">
    <subcellularLocation>
        <location evidence="1">Cellular thylakoid membrane</location>
        <topology evidence="1">Single-pass membrane protein</topology>
    </subcellularLocation>
</comment>
<comment type="similarity">
    <text evidence="1">Belongs to the PsbM family.</text>
</comment>
<protein>
    <recommendedName>
        <fullName evidence="1">Photosystem II reaction center protein M</fullName>
        <shortName evidence="1">PSII-M</shortName>
    </recommendedName>
</protein>
<name>PSBM_CROS5</name>
<sequence>MEVNDLGFIATILFVLVPTVFLLILYIQTREETES</sequence>
<reference key="1">
    <citation type="journal article" date="2008" name="Proc. Natl. Acad. Sci. U.S.A.">
        <title>The genome of Cyanothece 51142, a unicellular diazotrophic cyanobacterium important in the marine nitrogen cycle.</title>
        <authorList>
            <person name="Welsh E.A."/>
            <person name="Liberton M."/>
            <person name="Stoeckel J."/>
            <person name="Loh T."/>
            <person name="Elvitigala T."/>
            <person name="Wang C."/>
            <person name="Wollam A."/>
            <person name="Fulton R.S."/>
            <person name="Clifton S.W."/>
            <person name="Jacobs J.M."/>
            <person name="Aurora R."/>
            <person name="Ghosh B.K."/>
            <person name="Sherman L.A."/>
            <person name="Smith R.D."/>
            <person name="Wilson R.K."/>
            <person name="Pakrasi H.B."/>
        </authorList>
    </citation>
    <scope>NUCLEOTIDE SEQUENCE [LARGE SCALE GENOMIC DNA]</scope>
    <source>
        <strain>ATCC 51142 / BH68</strain>
    </source>
</reference>
<organism>
    <name type="scientific">Crocosphaera subtropica (strain ATCC 51142 / BH68)</name>
    <name type="common">Cyanothece sp. (strain ATCC 51142)</name>
    <dbReference type="NCBI Taxonomy" id="43989"/>
    <lineage>
        <taxon>Bacteria</taxon>
        <taxon>Bacillati</taxon>
        <taxon>Cyanobacteriota</taxon>
        <taxon>Cyanophyceae</taxon>
        <taxon>Oscillatoriophycideae</taxon>
        <taxon>Chroococcales</taxon>
        <taxon>Aphanothecaceae</taxon>
        <taxon>Crocosphaera</taxon>
        <taxon>Crocosphaera subtropica</taxon>
    </lineage>
</organism>
<accession>B1WS50</accession>
<evidence type="ECO:0000255" key="1">
    <source>
        <dbReference type="HAMAP-Rule" id="MF_00438"/>
    </source>
</evidence>
<proteinExistence type="inferred from homology"/>
<keyword id="KW-0472">Membrane</keyword>
<keyword id="KW-0602">Photosynthesis</keyword>
<keyword id="KW-0604">Photosystem II</keyword>
<keyword id="KW-0674">Reaction center</keyword>
<keyword id="KW-1185">Reference proteome</keyword>
<keyword id="KW-0793">Thylakoid</keyword>
<keyword id="KW-0812">Transmembrane</keyword>
<keyword id="KW-1133">Transmembrane helix</keyword>